<protein>
    <recommendedName>
        <fullName evidence="1">Transcriptional repressor NrdR</fullName>
    </recommendedName>
</protein>
<proteinExistence type="inferred from homology"/>
<dbReference type="EMBL" id="BX548174">
    <property type="protein sequence ID" value="CAE18772.1"/>
    <property type="molecule type" value="Genomic_DNA"/>
</dbReference>
<dbReference type="RefSeq" id="WP_011131950.1">
    <property type="nucleotide sequence ID" value="NC_005072.1"/>
</dbReference>
<dbReference type="SMR" id="Q7V2Y6"/>
<dbReference type="STRING" id="59919.PMM0313"/>
<dbReference type="KEGG" id="pmm:PMM0313"/>
<dbReference type="eggNOG" id="COG1327">
    <property type="taxonomic scope" value="Bacteria"/>
</dbReference>
<dbReference type="HOGENOM" id="CLU_108412_0_0_3"/>
<dbReference type="OrthoDB" id="9807461at2"/>
<dbReference type="Proteomes" id="UP000001026">
    <property type="component" value="Chromosome"/>
</dbReference>
<dbReference type="GO" id="GO:0005524">
    <property type="term" value="F:ATP binding"/>
    <property type="evidence" value="ECO:0007669"/>
    <property type="project" value="UniProtKB-KW"/>
</dbReference>
<dbReference type="GO" id="GO:0003677">
    <property type="term" value="F:DNA binding"/>
    <property type="evidence" value="ECO:0007669"/>
    <property type="project" value="UniProtKB-KW"/>
</dbReference>
<dbReference type="GO" id="GO:0008270">
    <property type="term" value="F:zinc ion binding"/>
    <property type="evidence" value="ECO:0007669"/>
    <property type="project" value="UniProtKB-UniRule"/>
</dbReference>
<dbReference type="GO" id="GO:0045892">
    <property type="term" value="P:negative regulation of DNA-templated transcription"/>
    <property type="evidence" value="ECO:0007669"/>
    <property type="project" value="UniProtKB-UniRule"/>
</dbReference>
<dbReference type="HAMAP" id="MF_00440">
    <property type="entry name" value="NrdR"/>
    <property type="match status" value="1"/>
</dbReference>
<dbReference type="InterPro" id="IPR005144">
    <property type="entry name" value="ATP-cone_dom"/>
</dbReference>
<dbReference type="InterPro" id="IPR055173">
    <property type="entry name" value="NrdR-like_N"/>
</dbReference>
<dbReference type="InterPro" id="IPR003796">
    <property type="entry name" value="RNR_NrdR-like"/>
</dbReference>
<dbReference type="NCBIfam" id="TIGR00244">
    <property type="entry name" value="transcriptional regulator NrdR"/>
    <property type="match status" value="1"/>
</dbReference>
<dbReference type="PANTHER" id="PTHR30455">
    <property type="entry name" value="TRANSCRIPTIONAL REPRESSOR NRDR"/>
    <property type="match status" value="1"/>
</dbReference>
<dbReference type="PANTHER" id="PTHR30455:SF2">
    <property type="entry name" value="TRANSCRIPTIONAL REPRESSOR NRDR"/>
    <property type="match status" value="1"/>
</dbReference>
<dbReference type="Pfam" id="PF03477">
    <property type="entry name" value="ATP-cone"/>
    <property type="match status" value="1"/>
</dbReference>
<dbReference type="Pfam" id="PF22811">
    <property type="entry name" value="Zn_ribbon_NrdR"/>
    <property type="match status" value="1"/>
</dbReference>
<dbReference type="PROSITE" id="PS51161">
    <property type="entry name" value="ATP_CONE"/>
    <property type="match status" value="1"/>
</dbReference>
<evidence type="ECO:0000255" key="1">
    <source>
        <dbReference type="HAMAP-Rule" id="MF_00440"/>
    </source>
</evidence>
<organism>
    <name type="scientific">Prochlorococcus marinus subsp. pastoris (strain CCMP1986 / NIES-2087 / MED4)</name>
    <dbReference type="NCBI Taxonomy" id="59919"/>
    <lineage>
        <taxon>Bacteria</taxon>
        <taxon>Bacillati</taxon>
        <taxon>Cyanobacteriota</taxon>
        <taxon>Cyanophyceae</taxon>
        <taxon>Synechococcales</taxon>
        <taxon>Prochlorococcaceae</taxon>
        <taxon>Prochlorococcus</taxon>
    </lineage>
</organism>
<comment type="function">
    <text evidence="1">Negatively regulates transcription of bacterial ribonucleotide reductase nrd genes and operons by binding to NrdR-boxes.</text>
</comment>
<comment type="cofactor">
    <cofactor evidence="1">
        <name>Zn(2+)</name>
        <dbReference type="ChEBI" id="CHEBI:29105"/>
    </cofactor>
    <text evidence="1">Binds 1 zinc ion.</text>
</comment>
<comment type="similarity">
    <text evidence="1">Belongs to the NrdR family.</text>
</comment>
<reference key="1">
    <citation type="journal article" date="2003" name="Nature">
        <title>Genome divergence in two Prochlorococcus ecotypes reflects oceanic niche differentiation.</title>
        <authorList>
            <person name="Rocap G."/>
            <person name="Larimer F.W."/>
            <person name="Lamerdin J.E."/>
            <person name="Malfatti S."/>
            <person name="Chain P."/>
            <person name="Ahlgren N.A."/>
            <person name="Arellano A."/>
            <person name="Coleman M."/>
            <person name="Hauser L."/>
            <person name="Hess W.R."/>
            <person name="Johnson Z.I."/>
            <person name="Land M.L."/>
            <person name="Lindell D."/>
            <person name="Post A.F."/>
            <person name="Regala W."/>
            <person name="Shah M."/>
            <person name="Shaw S.L."/>
            <person name="Steglich C."/>
            <person name="Sullivan M.B."/>
            <person name="Ting C.S."/>
            <person name="Tolonen A."/>
            <person name="Webb E.A."/>
            <person name="Zinser E.R."/>
            <person name="Chisholm S.W."/>
        </authorList>
    </citation>
    <scope>NUCLEOTIDE SEQUENCE [LARGE SCALE GENOMIC DNA]</scope>
    <source>
        <strain>CCMP1986 / NIES-2087 / MED4</strain>
    </source>
</reference>
<name>NRDR_PROMP</name>
<sequence length="159" mass="18095">MQCPTCQNTDSRVLESRSADTGKSVRRRRECLNCSFRFTTYERVETMPISVIKKDGSRELFNKDKLVTGISRACEKTTFSRESIINFVDSIESQIVQDSNKDIKSSQIGELILKGLRKENEVAYIRYASVYRKFNGVKDFVSTLESLKGSSKNELASIL</sequence>
<gene>
    <name evidence="1" type="primary">nrdR</name>
    <name type="ordered locus">PMM0313</name>
</gene>
<feature type="chain" id="PRO_0000182332" description="Transcriptional repressor NrdR">
    <location>
        <begin position="1"/>
        <end position="159"/>
    </location>
</feature>
<feature type="domain" description="ATP-cone" evidence="1">
    <location>
        <begin position="49"/>
        <end position="139"/>
    </location>
</feature>
<feature type="zinc finger region" evidence="1">
    <location>
        <begin position="3"/>
        <end position="34"/>
    </location>
</feature>
<keyword id="KW-0067">ATP-binding</keyword>
<keyword id="KW-0238">DNA-binding</keyword>
<keyword id="KW-0479">Metal-binding</keyword>
<keyword id="KW-0547">Nucleotide-binding</keyword>
<keyword id="KW-0678">Repressor</keyword>
<keyword id="KW-0804">Transcription</keyword>
<keyword id="KW-0805">Transcription regulation</keyword>
<keyword id="KW-0862">Zinc</keyword>
<keyword id="KW-0863">Zinc-finger</keyword>
<accession>Q7V2Y6</accession>